<proteinExistence type="evidence at transcript level"/>
<accession>Q1PDW5</accession>
<accession>Q9LXF7</accession>
<dbReference type="EC" id="3.4.24.-"/>
<dbReference type="EMBL" id="AL353993">
    <property type="protein sequence ID" value="CAB89335.1"/>
    <property type="status" value="ALT_SEQ"/>
    <property type="molecule type" value="Genomic_DNA"/>
</dbReference>
<dbReference type="EMBL" id="CP002688">
    <property type="protein sequence ID" value="AED92136.1"/>
    <property type="molecule type" value="Genomic_DNA"/>
</dbReference>
<dbReference type="EMBL" id="DQ446953">
    <property type="protein sequence ID" value="ABE66158.1"/>
    <property type="molecule type" value="mRNA"/>
</dbReference>
<dbReference type="PIR" id="T49960">
    <property type="entry name" value="T49960"/>
</dbReference>
<dbReference type="RefSeq" id="NP_568311.2">
    <molecule id="Q1PDW5-1"/>
    <property type="nucleotide sequence ID" value="NM_121529.2"/>
</dbReference>
<dbReference type="SMR" id="Q1PDW5"/>
<dbReference type="STRING" id="3702.Q1PDW5"/>
<dbReference type="MEROPS" id="M41.019"/>
<dbReference type="PaxDb" id="3702-AT5G15250.2"/>
<dbReference type="EnsemblPlants" id="AT5G15250.1">
    <molecule id="Q1PDW5-1"/>
    <property type="protein sequence ID" value="AT5G15250.1"/>
    <property type="gene ID" value="AT5G15250"/>
</dbReference>
<dbReference type="GeneID" id="831377"/>
<dbReference type="Gramene" id="AT5G15250.1">
    <molecule id="Q1PDW5-1"/>
    <property type="protein sequence ID" value="AT5G15250.1"/>
    <property type="gene ID" value="AT5G15250"/>
</dbReference>
<dbReference type="KEGG" id="ath:AT5G15250"/>
<dbReference type="Araport" id="AT5G15250"/>
<dbReference type="TAIR" id="AT5G15250">
    <property type="gene designation" value="FTSH6"/>
</dbReference>
<dbReference type="eggNOG" id="KOG0731">
    <property type="taxonomic scope" value="Eukaryota"/>
</dbReference>
<dbReference type="HOGENOM" id="CLU_000688_16_0_1"/>
<dbReference type="InParanoid" id="Q1PDW5"/>
<dbReference type="OMA" id="AHPMEIN"/>
<dbReference type="PhylomeDB" id="Q1PDW5"/>
<dbReference type="BRENDA" id="3.4.24.B20">
    <property type="organism ID" value="399"/>
</dbReference>
<dbReference type="PRO" id="PR:Q1PDW5"/>
<dbReference type="Proteomes" id="UP000006548">
    <property type="component" value="Chromosome 5"/>
</dbReference>
<dbReference type="ExpressionAtlas" id="Q1PDW5">
    <property type="expression patterns" value="baseline and differential"/>
</dbReference>
<dbReference type="GO" id="GO:0009535">
    <property type="term" value="C:chloroplast thylakoid membrane"/>
    <property type="evidence" value="ECO:0007669"/>
    <property type="project" value="UniProtKB-SubCell"/>
</dbReference>
<dbReference type="GO" id="GO:0005524">
    <property type="term" value="F:ATP binding"/>
    <property type="evidence" value="ECO:0007669"/>
    <property type="project" value="UniProtKB-KW"/>
</dbReference>
<dbReference type="GO" id="GO:0016887">
    <property type="term" value="F:ATP hydrolysis activity"/>
    <property type="evidence" value="ECO:0007669"/>
    <property type="project" value="InterPro"/>
</dbReference>
<dbReference type="GO" id="GO:0004176">
    <property type="term" value="F:ATP-dependent peptidase activity"/>
    <property type="evidence" value="ECO:0007669"/>
    <property type="project" value="InterPro"/>
</dbReference>
<dbReference type="GO" id="GO:0004222">
    <property type="term" value="F:metalloendopeptidase activity"/>
    <property type="evidence" value="ECO:0007669"/>
    <property type="project" value="InterPro"/>
</dbReference>
<dbReference type="GO" id="GO:0008270">
    <property type="term" value="F:zinc ion binding"/>
    <property type="evidence" value="ECO:0007669"/>
    <property type="project" value="InterPro"/>
</dbReference>
<dbReference type="GO" id="GO:0006508">
    <property type="term" value="P:proteolysis"/>
    <property type="evidence" value="ECO:0007669"/>
    <property type="project" value="UniProtKB-KW"/>
</dbReference>
<dbReference type="CDD" id="cd19501">
    <property type="entry name" value="RecA-like_FtsH"/>
    <property type="match status" value="1"/>
</dbReference>
<dbReference type="FunFam" id="1.10.8.60:FF:000001">
    <property type="entry name" value="ATP-dependent zinc metalloprotease FtsH"/>
    <property type="match status" value="1"/>
</dbReference>
<dbReference type="FunFam" id="3.40.50.300:FF:000001">
    <property type="entry name" value="ATP-dependent zinc metalloprotease FtsH"/>
    <property type="match status" value="1"/>
</dbReference>
<dbReference type="FunFam" id="1.20.58.760:FF:000035">
    <property type="entry name" value="ATP-dependent zinc metalloprotease FTSH 6 chloroplastic"/>
    <property type="match status" value="1"/>
</dbReference>
<dbReference type="FunFam" id="3.30.720.210:FF:000002">
    <property type="entry name" value="ATP-dependent zinc metalloprotease FTSH chloroplastic"/>
    <property type="match status" value="1"/>
</dbReference>
<dbReference type="Gene3D" id="1.10.8.60">
    <property type="match status" value="1"/>
</dbReference>
<dbReference type="Gene3D" id="3.30.720.210">
    <property type="match status" value="1"/>
</dbReference>
<dbReference type="Gene3D" id="3.40.50.300">
    <property type="entry name" value="P-loop containing nucleotide triphosphate hydrolases"/>
    <property type="match status" value="1"/>
</dbReference>
<dbReference type="Gene3D" id="1.20.58.760">
    <property type="entry name" value="Peptidase M41"/>
    <property type="match status" value="1"/>
</dbReference>
<dbReference type="HAMAP" id="MF_01458">
    <property type="entry name" value="FtsH"/>
    <property type="match status" value="1"/>
</dbReference>
<dbReference type="InterPro" id="IPR003593">
    <property type="entry name" value="AAA+_ATPase"/>
</dbReference>
<dbReference type="InterPro" id="IPR041569">
    <property type="entry name" value="AAA_lid_3"/>
</dbReference>
<dbReference type="InterPro" id="IPR003959">
    <property type="entry name" value="ATPase_AAA_core"/>
</dbReference>
<dbReference type="InterPro" id="IPR003960">
    <property type="entry name" value="ATPase_AAA_CS"/>
</dbReference>
<dbReference type="InterPro" id="IPR005936">
    <property type="entry name" value="FtsH"/>
</dbReference>
<dbReference type="InterPro" id="IPR027417">
    <property type="entry name" value="P-loop_NTPase"/>
</dbReference>
<dbReference type="InterPro" id="IPR011546">
    <property type="entry name" value="Pept_M41_FtsH_extracell"/>
</dbReference>
<dbReference type="InterPro" id="IPR000642">
    <property type="entry name" value="Peptidase_M41"/>
</dbReference>
<dbReference type="InterPro" id="IPR037219">
    <property type="entry name" value="Peptidase_M41-like"/>
</dbReference>
<dbReference type="NCBIfam" id="TIGR01241">
    <property type="entry name" value="FtsH_fam"/>
    <property type="match status" value="1"/>
</dbReference>
<dbReference type="PANTHER" id="PTHR23076:SF118">
    <property type="entry name" value="ATP-DEPENDENT ZINC METALLOPROTEASE FTSH 6, CHLOROPLASTIC"/>
    <property type="match status" value="1"/>
</dbReference>
<dbReference type="PANTHER" id="PTHR23076">
    <property type="entry name" value="METALLOPROTEASE M41 FTSH"/>
    <property type="match status" value="1"/>
</dbReference>
<dbReference type="Pfam" id="PF00004">
    <property type="entry name" value="AAA"/>
    <property type="match status" value="1"/>
</dbReference>
<dbReference type="Pfam" id="PF17862">
    <property type="entry name" value="AAA_lid_3"/>
    <property type="match status" value="1"/>
</dbReference>
<dbReference type="Pfam" id="PF06480">
    <property type="entry name" value="FtsH_ext"/>
    <property type="match status" value="1"/>
</dbReference>
<dbReference type="Pfam" id="PF01434">
    <property type="entry name" value="Peptidase_M41"/>
    <property type="match status" value="1"/>
</dbReference>
<dbReference type="SMART" id="SM00382">
    <property type="entry name" value="AAA"/>
    <property type="match status" value="1"/>
</dbReference>
<dbReference type="SUPFAM" id="SSF140990">
    <property type="entry name" value="FtsH protease domain-like"/>
    <property type="match status" value="1"/>
</dbReference>
<dbReference type="SUPFAM" id="SSF52540">
    <property type="entry name" value="P-loop containing nucleoside triphosphate hydrolases"/>
    <property type="match status" value="1"/>
</dbReference>
<dbReference type="PROSITE" id="PS00674">
    <property type="entry name" value="AAA"/>
    <property type="match status" value="1"/>
</dbReference>
<name>FTSH6_ARATH</name>
<comment type="function">
    <text evidence="5">Probable ATP-dependent zinc metallopeptidase. Involved in the degradation of the light-harvesting complex of photosystem II (LHC II) during senescence or high light acclimation.</text>
</comment>
<comment type="cofactor">
    <cofactor evidence="6">
        <name>Zn(2+)</name>
        <dbReference type="ChEBI" id="CHEBI:29105"/>
    </cofactor>
    <text evidence="6">Binds 1 zinc ion per subunit.</text>
</comment>
<comment type="subcellular location">
    <subcellularLocation>
        <location evidence="4 5">Plastid</location>
        <location evidence="4 5">Chloroplast thylakoid membrane</location>
        <topology evidence="4 5">Single-pass membrane protein</topology>
        <orientation evidence="4 5">Stromal side</orientation>
    </subcellularLocation>
</comment>
<comment type="alternative products">
    <event type="alternative splicing"/>
    <isoform>
        <id>Q1PDW5-1</id>
        <name>1</name>
        <sequence type="displayed"/>
    </isoform>
    <text>A number of isoforms are produced. According to EST sequences.</text>
</comment>
<comment type="domain">
    <text>The conserved lumenal (CL) domain (84-162) is present only in some FtsH homologs from organisms performing oxygenic photosynthesis.</text>
</comment>
<comment type="disruption phenotype">
    <text evidence="5">No visible phenotype.</text>
</comment>
<comment type="similarity">
    <text evidence="6">In the N-terminal section; belongs to the AAA ATPase family.</text>
</comment>
<comment type="similarity">
    <text evidence="6">In the C-terminal section; belongs to the peptidase M41 family.</text>
</comment>
<comment type="sequence caution" evidence="6">
    <conflict type="erroneous gene model prediction">
        <sequence resource="EMBL-CDS" id="CAB89335"/>
    </conflict>
</comment>
<gene>
    <name type="primary">FTSH6</name>
    <name type="ordered locus">At5g15250</name>
    <name type="ORF">F8M21.140</name>
</gene>
<evidence type="ECO:0000250" key="1"/>
<evidence type="ECO:0000255" key="2"/>
<evidence type="ECO:0000256" key="3">
    <source>
        <dbReference type="SAM" id="MobiDB-lite"/>
    </source>
</evidence>
<evidence type="ECO:0000269" key="4">
    <source>
    </source>
</evidence>
<evidence type="ECO:0000269" key="5">
    <source>
    </source>
</evidence>
<evidence type="ECO:0000305" key="6"/>
<keyword id="KW-0025">Alternative splicing</keyword>
<keyword id="KW-0067">ATP-binding</keyword>
<keyword id="KW-0150">Chloroplast</keyword>
<keyword id="KW-0378">Hydrolase</keyword>
<keyword id="KW-0472">Membrane</keyword>
<keyword id="KW-0479">Metal-binding</keyword>
<keyword id="KW-0482">Metalloprotease</keyword>
<keyword id="KW-0547">Nucleotide-binding</keyword>
<keyword id="KW-0934">Plastid</keyword>
<keyword id="KW-0645">Protease</keyword>
<keyword id="KW-1185">Reference proteome</keyword>
<keyword id="KW-0793">Thylakoid</keyword>
<keyword id="KW-0809">Transit peptide</keyword>
<keyword id="KW-0812">Transmembrane</keyword>
<keyword id="KW-1133">Transmembrane helix</keyword>
<keyword id="KW-0862">Zinc</keyword>
<protein>
    <recommendedName>
        <fullName>ATP-dependent zinc metalloprotease FTSH 6, chloroplastic</fullName>
        <shortName>AtFTSH6</shortName>
        <ecNumber>3.4.24.-</ecNumber>
    </recommendedName>
</protein>
<sequence length="688" mass="74515">MKMASSSSALSFPLSNIPTCSKKSQQFQKPASLSKSSHTHKPSLKTQILHHKFTKRNLLSLTTALGFTSALGTVLAHPAKAEPEAPIEATSNRMSYSRFLQHLKENEVKKVDLIENGTVAIVEISNPVVGKIQRVRVNLPGLPVDLVREMKEKNVDFAAHPMNVNWGAFLLNFLGNLGFPLILLVSLLLTSSSRRNPAGPNLPFGLGRSKAKFQMEPNTGITFEDVAGVDEAKQDFEEIVEFLKTPEKFSALGAKIPKGVLLTGPPGTGKTLLAKAIAGEAGVPFFSLSGSEFIEMFVGVGASRARDLFNKAKANSPCIVFIDEIDAVGRMRGTGIGGGNDEREQTLNQILTEMDGFAGNTGVIVIAATNRPEILDSALLRPGRFDRQVSVGLPDIRGREEILKVHSRSKKLDKDVSLSVIAMRTPGFSGADLANLMNEAAILAGRRGKDKITLTEIDDSIDRIVAGMEGTKMIDGKSKAIVAYHEVGHAICATLTEGHDPVQKVTLVPRGQARGLTWFLPGEDPTLVSKQQLFARIVGGLGGRAAEDVIFGEPEITTGAAGDLQQVTEIARQMVTMFGMSEIGPWALTDPAVKQNDVVLRMLARNSMSEKLAEDIDSCVKKIIGDAYEVAKKHVRNNREAIDKLVDVLLEKETLTGDEFRAILSEYTDQPLNTDGDVRIRINDLISV</sequence>
<feature type="transit peptide" description="Chloroplast" evidence="2">
    <location>
        <begin position="1"/>
        <end position="75"/>
    </location>
</feature>
<feature type="transit peptide" description="Thylakoid" evidence="1">
    <location>
        <begin position="76"/>
        <end position="83"/>
    </location>
</feature>
<feature type="chain" id="PRO_0000341331" description="ATP-dependent zinc metalloprotease FTSH 6, chloroplastic">
    <location>
        <begin position="84"/>
        <end position="688"/>
    </location>
</feature>
<feature type="topological domain" description="Lumenal, thylakoid" evidence="2">
    <location>
        <begin position="84"/>
        <end position="168"/>
    </location>
</feature>
<feature type="transmembrane region" description="Helical" evidence="2">
    <location>
        <begin position="169"/>
        <end position="189"/>
    </location>
</feature>
<feature type="topological domain" description="Stromal" evidence="2">
    <location>
        <begin position="190"/>
        <end position="688"/>
    </location>
</feature>
<feature type="region of interest" description="Disordered" evidence="3">
    <location>
        <begin position="25"/>
        <end position="44"/>
    </location>
</feature>
<feature type="compositionally biased region" description="Polar residues" evidence="3">
    <location>
        <begin position="25"/>
        <end position="36"/>
    </location>
</feature>
<feature type="active site" evidence="1">
    <location>
        <position position="486"/>
    </location>
</feature>
<feature type="binding site" evidence="2">
    <location>
        <begin position="264"/>
        <end position="271"/>
    </location>
    <ligand>
        <name>ATP</name>
        <dbReference type="ChEBI" id="CHEBI:30616"/>
    </ligand>
</feature>
<feature type="binding site" evidence="1">
    <location>
        <position position="485"/>
    </location>
    <ligand>
        <name>Zn(2+)</name>
        <dbReference type="ChEBI" id="CHEBI:29105"/>
        <note>catalytic</note>
    </ligand>
</feature>
<feature type="binding site" evidence="1">
    <location>
        <position position="489"/>
    </location>
    <ligand>
        <name>Zn(2+)</name>
        <dbReference type="ChEBI" id="CHEBI:29105"/>
        <note>catalytic</note>
    </ligand>
</feature>
<feature type="binding site" evidence="1">
    <location>
        <position position="563"/>
    </location>
    <ligand>
        <name>Zn(2+)</name>
        <dbReference type="ChEBI" id="CHEBI:29105"/>
        <note>catalytic</note>
    </ligand>
</feature>
<reference key="1">
    <citation type="journal article" date="2000" name="Nature">
        <title>Sequence and analysis of chromosome 5 of the plant Arabidopsis thaliana.</title>
        <authorList>
            <person name="Tabata S."/>
            <person name="Kaneko T."/>
            <person name="Nakamura Y."/>
            <person name="Kotani H."/>
            <person name="Kato T."/>
            <person name="Asamizu E."/>
            <person name="Miyajima N."/>
            <person name="Sasamoto S."/>
            <person name="Kimura T."/>
            <person name="Hosouchi T."/>
            <person name="Kawashima K."/>
            <person name="Kohara M."/>
            <person name="Matsumoto M."/>
            <person name="Matsuno A."/>
            <person name="Muraki A."/>
            <person name="Nakayama S."/>
            <person name="Nakazaki N."/>
            <person name="Naruo K."/>
            <person name="Okumura S."/>
            <person name="Shinpo S."/>
            <person name="Takeuchi C."/>
            <person name="Wada T."/>
            <person name="Watanabe A."/>
            <person name="Yamada M."/>
            <person name="Yasuda M."/>
            <person name="Sato S."/>
            <person name="de la Bastide M."/>
            <person name="Huang E."/>
            <person name="Spiegel L."/>
            <person name="Gnoj L."/>
            <person name="O'Shaughnessy A."/>
            <person name="Preston R."/>
            <person name="Habermann K."/>
            <person name="Murray J."/>
            <person name="Johnson D."/>
            <person name="Rohlfing T."/>
            <person name="Nelson J."/>
            <person name="Stoneking T."/>
            <person name="Pepin K."/>
            <person name="Spieth J."/>
            <person name="Sekhon M."/>
            <person name="Armstrong J."/>
            <person name="Becker M."/>
            <person name="Belter E."/>
            <person name="Cordum H."/>
            <person name="Cordes M."/>
            <person name="Courtney L."/>
            <person name="Courtney W."/>
            <person name="Dante M."/>
            <person name="Du H."/>
            <person name="Edwards J."/>
            <person name="Fryman J."/>
            <person name="Haakensen B."/>
            <person name="Lamar E."/>
            <person name="Latreille P."/>
            <person name="Leonard S."/>
            <person name="Meyer R."/>
            <person name="Mulvaney E."/>
            <person name="Ozersky P."/>
            <person name="Riley A."/>
            <person name="Strowmatt C."/>
            <person name="Wagner-McPherson C."/>
            <person name="Wollam A."/>
            <person name="Yoakum M."/>
            <person name="Bell M."/>
            <person name="Dedhia N."/>
            <person name="Parnell L."/>
            <person name="Shah R."/>
            <person name="Rodriguez M."/>
            <person name="Hoon See L."/>
            <person name="Vil D."/>
            <person name="Baker J."/>
            <person name="Kirchoff K."/>
            <person name="Toth K."/>
            <person name="King L."/>
            <person name="Bahret A."/>
            <person name="Miller B."/>
            <person name="Marra M.A."/>
            <person name="Martienssen R."/>
            <person name="McCombie W.R."/>
            <person name="Wilson R.K."/>
            <person name="Murphy G."/>
            <person name="Bancroft I."/>
            <person name="Volckaert G."/>
            <person name="Wambutt R."/>
            <person name="Duesterhoeft A."/>
            <person name="Stiekema W."/>
            <person name="Pohl T."/>
            <person name="Entian K.-D."/>
            <person name="Terryn N."/>
            <person name="Hartley N."/>
            <person name="Bent E."/>
            <person name="Johnson S."/>
            <person name="Langham S.-A."/>
            <person name="McCullagh B."/>
            <person name="Robben J."/>
            <person name="Grymonprez B."/>
            <person name="Zimmermann W."/>
            <person name="Ramsperger U."/>
            <person name="Wedler H."/>
            <person name="Balke K."/>
            <person name="Wedler E."/>
            <person name="Peters S."/>
            <person name="van Staveren M."/>
            <person name="Dirkse W."/>
            <person name="Mooijman P."/>
            <person name="Klein Lankhorst R."/>
            <person name="Weitzenegger T."/>
            <person name="Bothe G."/>
            <person name="Rose M."/>
            <person name="Hauf J."/>
            <person name="Berneiser S."/>
            <person name="Hempel S."/>
            <person name="Feldpausch M."/>
            <person name="Lamberth S."/>
            <person name="Villarroel R."/>
            <person name="Gielen J."/>
            <person name="Ardiles W."/>
            <person name="Bents O."/>
            <person name="Lemcke K."/>
            <person name="Kolesov G."/>
            <person name="Mayer K.F.X."/>
            <person name="Rudd S."/>
            <person name="Schoof H."/>
            <person name="Schueller C."/>
            <person name="Zaccaria P."/>
            <person name="Mewes H.-W."/>
            <person name="Bevan M."/>
            <person name="Fransz P.F."/>
        </authorList>
    </citation>
    <scope>NUCLEOTIDE SEQUENCE [LARGE SCALE GENOMIC DNA]</scope>
    <source>
        <strain>cv. Columbia</strain>
    </source>
</reference>
<reference key="2">
    <citation type="journal article" date="2017" name="Plant J.">
        <title>Araport11: a complete reannotation of the Arabidopsis thaliana reference genome.</title>
        <authorList>
            <person name="Cheng C.Y."/>
            <person name="Krishnakumar V."/>
            <person name="Chan A.P."/>
            <person name="Thibaud-Nissen F."/>
            <person name="Schobel S."/>
            <person name="Town C.D."/>
        </authorList>
    </citation>
    <scope>GENOME REANNOTATION</scope>
    <source>
        <strain>cv. Columbia</strain>
    </source>
</reference>
<reference key="3">
    <citation type="journal article" date="2006" name="Plant Biotechnol. J.">
        <title>Simultaneous high-throughput recombinational cloning of open reading frames in closed and open configurations.</title>
        <authorList>
            <person name="Underwood B.A."/>
            <person name="Vanderhaeghen R."/>
            <person name="Whitford R."/>
            <person name="Town C.D."/>
            <person name="Hilson P."/>
        </authorList>
    </citation>
    <scope>NUCLEOTIDE SEQUENCE [LARGE SCALE MRNA]</scope>
    <source>
        <strain>cv. Columbia</strain>
    </source>
</reference>
<reference key="4">
    <citation type="journal article" date="2001" name="Plant Physiol.">
        <title>Chloroplast and mitochondrial proteases in Arabidopsis. A proposed nomenclature.</title>
        <authorList>
            <person name="Adam Z."/>
            <person name="Adamska I."/>
            <person name="Nakabayashi K."/>
            <person name="Ostersetzer O."/>
            <person name="Haussuhl K."/>
            <person name="Manuell A."/>
            <person name="Zheng B."/>
            <person name="Vallon O."/>
            <person name="Rodermel S.R."/>
            <person name="Shinozaki K."/>
            <person name="Clarke A.K."/>
        </authorList>
    </citation>
    <scope>GENE FAMILY</scope>
    <scope>NOMENCLATURE</scope>
</reference>
<reference key="5">
    <citation type="journal article" date="2002" name="J. Biol. Chem.">
        <title>A critical role for the Var2 FtsH homologue of Arabidopsis thaliana in the photosystem II repair cycle in vivo.</title>
        <authorList>
            <person name="Bailey S."/>
            <person name="Thompson E."/>
            <person name="Nixon P.J."/>
            <person name="Horton P."/>
            <person name="Mullineaux C.W."/>
            <person name="Robinson C."/>
            <person name="Mann N.H."/>
        </authorList>
    </citation>
    <scope>CONSERVED LUMENAL DOMAIN</scope>
</reference>
<reference key="6">
    <citation type="journal article" date="2003" name="Plant Cell">
        <title>Coordinated regulation and complex formation of yellow variegated1 and yellow variegated2, chloroplastic FtsH metalloproteases involved in the repair cycle of photosystem II in Arabidopsis thylakoid membranes.</title>
        <authorList>
            <person name="Sakamoto W."/>
            <person name="Zaltsman A."/>
            <person name="Adam Z."/>
            <person name="Takahashi Y."/>
        </authorList>
    </citation>
    <scope>SUBCELLULAR LOCATION</scope>
</reference>
<reference key="7">
    <citation type="journal article" date="2004" name="Plant J.">
        <title>The Arabidopsis FtsH metalloprotease gene family: interchangeability of subunits in chloroplast oligomeric complexes.</title>
        <authorList>
            <person name="Yu F."/>
            <person name="Park S."/>
            <person name="Rodermel S.R."/>
        </authorList>
    </citation>
    <scope>GENE FAMILY</scope>
    <scope>NOMENCLATURE</scope>
</reference>
<reference key="8">
    <citation type="journal article" date="2005" name="Proc. Natl. Acad. Sci. U.S.A.">
        <title>AtFtsH6 is involved in the degradation of the light-harvesting complex II during high-light acclimation and senescence.</title>
        <authorList>
            <person name="Zelisko A."/>
            <person name="Garcia-Lorenzo M."/>
            <person name="Jackowski G."/>
            <person name="Jansson S."/>
            <person name="Funk C."/>
        </authorList>
    </citation>
    <scope>FUNCTION</scope>
    <scope>SUBCELLULAR LOCATION</scope>
    <scope>DISRUPTION PHENOTYPE</scope>
</reference>
<organism>
    <name type="scientific">Arabidopsis thaliana</name>
    <name type="common">Mouse-ear cress</name>
    <dbReference type="NCBI Taxonomy" id="3702"/>
    <lineage>
        <taxon>Eukaryota</taxon>
        <taxon>Viridiplantae</taxon>
        <taxon>Streptophyta</taxon>
        <taxon>Embryophyta</taxon>
        <taxon>Tracheophyta</taxon>
        <taxon>Spermatophyta</taxon>
        <taxon>Magnoliopsida</taxon>
        <taxon>eudicotyledons</taxon>
        <taxon>Gunneridae</taxon>
        <taxon>Pentapetalae</taxon>
        <taxon>rosids</taxon>
        <taxon>malvids</taxon>
        <taxon>Brassicales</taxon>
        <taxon>Brassicaceae</taxon>
        <taxon>Camelineae</taxon>
        <taxon>Arabidopsis</taxon>
    </lineage>
</organism>